<feature type="signal peptide" evidence="2 3">
    <location>
        <begin position="1"/>
        <end position="19"/>
    </location>
</feature>
<feature type="chain" id="PRO_0000006275" description="Cysteine-rich venom protein catrin">
    <location>
        <begin position="20"/>
        <end position="240"/>
    </location>
</feature>
<feature type="domain" description="SCP">
    <location>
        <begin position="38"/>
        <end position="166"/>
    </location>
</feature>
<feature type="domain" description="ShKT" evidence="1">
    <location>
        <begin position="202"/>
        <end position="235"/>
    </location>
</feature>
<feature type="disulfide bond" evidence="1">
    <location>
        <begin position="75"/>
        <end position="153"/>
    </location>
</feature>
<feature type="disulfide bond" evidence="1">
    <location>
        <begin position="92"/>
        <end position="167"/>
    </location>
</feature>
<feature type="disulfide bond" evidence="1">
    <location>
        <begin position="148"/>
        <end position="164"/>
    </location>
</feature>
<feature type="disulfide bond" evidence="1">
    <location>
        <begin position="186"/>
        <end position="193"/>
    </location>
</feature>
<feature type="disulfide bond" evidence="1">
    <location>
        <begin position="189"/>
        <end position="198"/>
    </location>
</feature>
<feature type="disulfide bond" evidence="1">
    <location>
        <begin position="202"/>
        <end position="235"/>
    </location>
</feature>
<feature type="disulfide bond" evidence="1">
    <location>
        <begin position="211"/>
        <end position="229"/>
    </location>
</feature>
<feature type="disulfide bond" evidence="1">
    <location>
        <begin position="220"/>
        <end position="233"/>
    </location>
</feature>
<feature type="sequence conflict" description="In Ref. 1; AA sequence." evidence="4" ref="1">
    <original>T</original>
    <variation>Y</variation>
    <location>
        <position position="178"/>
    </location>
</feature>
<accession>Q7ZT99</accession>
<sequence>MIAFIVLPILAAVLQQSSGSVDFDSESPRKPEIQNKIVDLHNFLRRSVNPTASNMLKMEWYPEAAANAERWAYRCIESHSPRDSRVLGGIKCGENIYMSPVPIKWTEIIHAWHGENKNFKYGIGAVPPNAVTGHFSQVVWYKSYRIGCAAAYCPSSKYSYFYVCQYCPAGNIIGKTATPYKSGPPCGDCPSACDNGLCTNPCTKEDKYTNCKSLVQQAGCQDKQMQSDCPAICFCQNKII</sequence>
<name>CRVP_CROAT</name>
<evidence type="ECO:0000255" key="1">
    <source>
        <dbReference type="PROSITE-ProRule" id="PRU01005"/>
    </source>
</evidence>
<evidence type="ECO:0000269" key="2">
    <source>
    </source>
</evidence>
<evidence type="ECO:0000269" key="3">
    <source>
    </source>
</evidence>
<evidence type="ECO:0000305" key="4"/>
<evidence type="ECO:0000305" key="5">
    <source>
    </source>
</evidence>
<reference key="1">
    <citation type="journal article" date="2003" name="Arch. Biochem. Biophys.">
        <title>Wide distribution of cysteine-rich secretory proteins in snake venoms: isolation and cloning of novel snake venom cysteine-rich secretory proteins.</title>
        <authorList>
            <person name="Yamazaki Y."/>
            <person name="Hyodo F."/>
            <person name="Morita T."/>
        </authorList>
    </citation>
    <scope>NUCLEOTIDE SEQUENCE [MRNA]</scope>
    <scope>PROTEIN SEQUENCE OF 20-74; 76-77; 92-117; 121-144; 158-204 AND 213-238</scope>
    <scope>FUNCTION</scope>
    <scope>MASS SPECTROMETRY</scope>
    <source>
        <tissue>Venom gland</tissue>
    </source>
</reference>
<reference key="2">
    <citation type="journal article" date="2009" name="J. Proteome Res.">
        <title>Exploring the venom proteome of the western diamondback rattlesnake, Crotalus atrox, via snake venomics and combinatorial peptide ligand library approaches.</title>
        <authorList>
            <person name="Calvete J.J."/>
            <person name="Fasoli E."/>
            <person name="Sanz L."/>
            <person name="Boschetti E."/>
            <person name="Righetti P.G."/>
        </authorList>
    </citation>
    <scope>PROTEIN SEQUENCE OF 20-34; 58-70; 146-157 AND 213-240</scope>
    <scope>IDENTIFICATION BY MASS SPECTROMETRY</scope>
    <source>
        <tissue>Venom</tissue>
    </source>
</reference>
<dbReference type="EMBL" id="AY181983">
    <property type="protein sequence ID" value="AAO62995.1"/>
    <property type="molecule type" value="mRNA"/>
</dbReference>
<dbReference type="SMR" id="Q7ZT99"/>
<dbReference type="GO" id="GO:0005576">
    <property type="term" value="C:extracellular region"/>
    <property type="evidence" value="ECO:0007669"/>
    <property type="project" value="UniProtKB-SubCell"/>
</dbReference>
<dbReference type="GO" id="GO:0005246">
    <property type="term" value="F:calcium channel regulator activity"/>
    <property type="evidence" value="ECO:0007669"/>
    <property type="project" value="UniProtKB-KW"/>
</dbReference>
<dbReference type="GO" id="GO:0090729">
    <property type="term" value="F:toxin activity"/>
    <property type="evidence" value="ECO:0007669"/>
    <property type="project" value="UniProtKB-KW"/>
</dbReference>
<dbReference type="CDD" id="cd05383">
    <property type="entry name" value="CAP_CRISP"/>
    <property type="match status" value="1"/>
</dbReference>
<dbReference type="FunFam" id="1.10.10.740:FF:000001">
    <property type="entry name" value="Cysteine-rich secretory protein 2"/>
    <property type="match status" value="1"/>
</dbReference>
<dbReference type="FunFam" id="3.40.33.10:FF:000005">
    <property type="entry name" value="Cysteine-rich secretory protein 2"/>
    <property type="match status" value="1"/>
</dbReference>
<dbReference type="Gene3D" id="3.40.33.10">
    <property type="entry name" value="CAP"/>
    <property type="match status" value="1"/>
</dbReference>
<dbReference type="Gene3D" id="1.10.10.740">
    <property type="entry name" value="Crisp domain"/>
    <property type="match status" value="1"/>
</dbReference>
<dbReference type="InterPro" id="IPR018244">
    <property type="entry name" value="Allrgn_V5/Tpx1_CS"/>
</dbReference>
<dbReference type="InterPro" id="IPR014044">
    <property type="entry name" value="CAP_dom"/>
</dbReference>
<dbReference type="InterPro" id="IPR035940">
    <property type="entry name" value="CAP_sf"/>
</dbReference>
<dbReference type="InterPro" id="IPR042076">
    <property type="entry name" value="Crisp-like_dom"/>
</dbReference>
<dbReference type="InterPro" id="IPR001283">
    <property type="entry name" value="CRISP-related"/>
</dbReference>
<dbReference type="InterPro" id="IPR013871">
    <property type="entry name" value="Cysteine_rich_secretory"/>
</dbReference>
<dbReference type="InterPro" id="IPR034117">
    <property type="entry name" value="SCP_CRISP"/>
</dbReference>
<dbReference type="InterPro" id="IPR003582">
    <property type="entry name" value="ShKT_dom"/>
</dbReference>
<dbReference type="InterPro" id="IPR002413">
    <property type="entry name" value="V5_allergen-like"/>
</dbReference>
<dbReference type="PANTHER" id="PTHR10334">
    <property type="entry name" value="CYSTEINE-RICH SECRETORY PROTEIN-RELATED"/>
    <property type="match status" value="1"/>
</dbReference>
<dbReference type="Pfam" id="PF00188">
    <property type="entry name" value="CAP"/>
    <property type="match status" value="1"/>
</dbReference>
<dbReference type="Pfam" id="PF08562">
    <property type="entry name" value="Crisp"/>
    <property type="match status" value="1"/>
</dbReference>
<dbReference type="PRINTS" id="PR00838">
    <property type="entry name" value="V5ALLERGEN"/>
</dbReference>
<dbReference type="PRINTS" id="PR00837">
    <property type="entry name" value="V5TPXLIKE"/>
</dbReference>
<dbReference type="SMART" id="SM00198">
    <property type="entry name" value="SCP"/>
    <property type="match status" value="1"/>
</dbReference>
<dbReference type="SUPFAM" id="SSF57546">
    <property type="entry name" value="Crisp domain-like"/>
    <property type="match status" value="1"/>
</dbReference>
<dbReference type="SUPFAM" id="SSF55797">
    <property type="entry name" value="PR-1-like"/>
    <property type="match status" value="1"/>
</dbReference>
<dbReference type="PROSITE" id="PS01009">
    <property type="entry name" value="CRISP_1"/>
    <property type="match status" value="1"/>
</dbReference>
<dbReference type="PROSITE" id="PS01010">
    <property type="entry name" value="CRISP_2"/>
    <property type="match status" value="1"/>
</dbReference>
<dbReference type="PROSITE" id="PS51670">
    <property type="entry name" value="SHKT"/>
    <property type="match status" value="1"/>
</dbReference>
<protein>
    <recommendedName>
        <fullName>Cysteine-rich venom protein catrin</fullName>
        <shortName>CRVP</shortName>
    </recommendedName>
    <alternativeName>
        <fullName>Catrin-1</fullName>
    </alternativeName>
    <alternativeName>
        <fullName>Catrin-2</fullName>
    </alternativeName>
</protein>
<keyword id="KW-0108">Calcium channel impairing toxin</keyword>
<keyword id="KW-0903">Direct protein sequencing</keyword>
<keyword id="KW-1015">Disulfide bond</keyword>
<keyword id="KW-0872">Ion channel impairing toxin</keyword>
<keyword id="KW-0528">Neurotoxin</keyword>
<keyword id="KW-0964">Secreted</keyword>
<keyword id="KW-0732">Signal</keyword>
<keyword id="KW-0800">Toxin</keyword>
<organism>
    <name type="scientific">Crotalus atrox</name>
    <name type="common">Western diamondback rattlesnake</name>
    <dbReference type="NCBI Taxonomy" id="8730"/>
    <lineage>
        <taxon>Eukaryota</taxon>
        <taxon>Metazoa</taxon>
        <taxon>Chordata</taxon>
        <taxon>Craniata</taxon>
        <taxon>Vertebrata</taxon>
        <taxon>Euteleostomi</taxon>
        <taxon>Lepidosauria</taxon>
        <taxon>Squamata</taxon>
        <taxon>Bifurcata</taxon>
        <taxon>Unidentata</taxon>
        <taxon>Episquamata</taxon>
        <taxon>Toxicofera</taxon>
        <taxon>Serpentes</taxon>
        <taxon>Colubroidea</taxon>
        <taxon>Viperidae</taxon>
        <taxon>Crotalinae</taxon>
        <taxon>Crotalus</taxon>
    </lineage>
</organism>
<comment type="function">
    <text evidence="2">Catrin-2 weakly blocks contraction of smooth muscle elicited by high potassium-induced depolarization, but does not block caffeine-stimulated contraction. Catrin-1 has no significant effect. May target voltage-gated calcium channels on smooth muscle.</text>
</comment>
<comment type="subcellular location">
    <subcellularLocation>
        <location>Secreted</location>
    </subcellularLocation>
</comment>
<comment type="tissue specificity">
    <text>Expressed by the venom gland.</text>
</comment>
<comment type="mass spectrometry">
    <text>Catrin-1.</text>
</comment>
<comment type="mass spectrometry">
    <text>Catrin-2.</text>
</comment>
<comment type="similarity">
    <text evidence="4">Belongs to the CRISP family.</text>
</comment>
<comment type="caution">
    <text evidence="5">Some authors describe two catrins (catrin-1 and -2), with different activities and masses, but no difference in sequence is described.</text>
</comment>
<proteinExistence type="evidence at protein level"/>